<comment type="function">
    <text evidence="1">This protein binds to 23S rRNA in the presence of protein L20.</text>
</comment>
<comment type="subunit">
    <text evidence="1">Part of the 50S ribosomal subunit. Contacts protein L20.</text>
</comment>
<comment type="similarity">
    <text evidence="1">Belongs to the bacterial ribosomal protein bL21 family.</text>
</comment>
<organism>
    <name type="scientific">Prochlorococcus marinus (strain MIT 9515)</name>
    <dbReference type="NCBI Taxonomy" id="167542"/>
    <lineage>
        <taxon>Bacteria</taxon>
        <taxon>Bacillati</taxon>
        <taxon>Cyanobacteriota</taxon>
        <taxon>Cyanophyceae</taxon>
        <taxon>Synechococcales</taxon>
        <taxon>Prochlorococcaceae</taxon>
        <taxon>Prochlorococcus</taxon>
    </lineage>
</organism>
<accession>A2BY51</accession>
<sequence>MTSSKKSSDNSSSSNDLYAIAETSGQQFWFEVDRYYDIDRLNAKEKDKITIDKILLIKDKENVSIGKPYIKNAKIELEVVSHKRDKKIIVYKMRPKKKTRRKMGHRQELTRVMVKSISISKSTPKSSPKTEATKKSTSSKASKPEN</sequence>
<dbReference type="EMBL" id="CP000552">
    <property type="protein sequence ID" value="ABM72712.1"/>
    <property type="molecule type" value="Genomic_DNA"/>
</dbReference>
<dbReference type="RefSeq" id="WP_011820808.1">
    <property type="nucleotide sequence ID" value="NC_008817.1"/>
</dbReference>
<dbReference type="SMR" id="A2BY51"/>
<dbReference type="STRING" id="167542.P9515_15051"/>
<dbReference type="GeneID" id="60201235"/>
<dbReference type="KEGG" id="pmc:P9515_15051"/>
<dbReference type="eggNOG" id="COG0261">
    <property type="taxonomic scope" value="Bacteria"/>
</dbReference>
<dbReference type="HOGENOM" id="CLU_061463_6_0_3"/>
<dbReference type="OrthoDB" id="9813334at2"/>
<dbReference type="Proteomes" id="UP000001589">
    <property type="component" value="Chromosome"/>
</dbReference>
<dbReference type="GO" id="GO:0005737">
    <property type="term" value="C:cytoplasm"/>
    <property type="evidence" value="ECO:0007669"/>
    <property type="project" value="UniProtKB-ARBA"/>
</dbReference>
<dbReference type="GO" id="GO:1990904">
    <property type="term" value="C:ribonucleoprotein complex"/>
    <property type="evidence" value="ECO:0007669"/>
    <property type="project" value="UniProtKB-KW"/>
</dbReference>
<dbReference type="GO" id="GO:0005840">
    <property type="term" value="C:ribosome"/>
    <property type="evidence" value="ECO:0007669"/>
    <property type="project" value="UniProtKB-KW"/>
</dbReference>
<dbReference type="GO" id="GO:0019843">
    <property type="term" value="F:rRNA binding"/>
    <property type="evidence" value="ECO:0007669"/>
    <property type="project" value="UniProtKB-UniRule"/>
</dbReference>
<dbReference type="GO" id="GO:0003735">
    <property type="term" value="F:structural constituent of ribosome"/>
    <property type="evidence" value="ECO:0007669"/>
    <property type="project" value="InterPro"/>
</dbReference>
<dbReference type="GO" id="GO:0006412">
    <property type="term" value="P:translation"/>
    <property type="evidence" value="ECO:0007669"/>
    <property type="project" value="UniProtKB-UniRule"/>
</dbReference>
<dbReference type="HAMAP" id="MF_01363">
    <property type="entry name" value="Ribosomal_bL21"/>
    <property type="match status" value="1"/>
</dbReference>
<dbReference type="InterPro" id="IPR028909">
    <property type="entry name" value="bL21-like"/>
</dbReference>
<dbReference type="InterPro" id="IPR036164">
    <property type="entry name" value="bL21-like_sf"/>
</dbReference>
<dbReference type="InterPro" id="IPR001787">
    <property type="entry name" value="Ribosomal_bL21"/>
</dbReference>
<dbReference type="InterPro" id="IPR018258">
    <property type="entry name" value="Ribosomal_bL21_CS"/>
</dbReference>
<dbReference type="NCBIfam" id="TIGR00061">
    <property type="entry name" value="L21"/>
    <property type="match status" value="1"/>
</dbReference>
<dbReference type="PANTHER" id="PTHR21349">
    <property type="entry name" value="50S RIBOSOMAL PROTEIN L21"/>
    <property type="match status" value="1"/>
</dbReference>
<dbReference type="PANTHER" id="PTHR21349:SF0">
    <property type="entry name" value="LARGE RIBOSOMAL SUBUNIT PROTEIN BL21M"/>
    <property type="match status" value="1"/>
</dbReference>
<dbReference type="Pfam" id="PF00829">
    <property type="entry name" value="Ribosomal_L21p"/>
    <property type="match status" value="1"/>
</dbReference>
<dbReference type="SUPFAM" id="SSF141091">
    <property type="entry name" value="L21p-like"/>
    <property type="match status" value="1"/>
</dbReference>
<dbReference type="PROSITE" id="PS01169">
    <property type="entry name" value="RIBOSOMAL_L21"/>
    <property type="match status" value="1"/>
</dbReference>
<reference key="1">
    <citation type="journal article" date="2007" name="PLoS Genet.">
        <title>Patterns and implications of gene gain and loss in the evolution of Prochlorococcus.</title>
        <authorList>
            <person name="Kettler G.C."/>
            <person name="Martiny A.C."/>
            <person name="Huang K."/>
            <person name="Zucker J."/>
            <person name="Coleman M.L."/>
            <person name="Rodrigue S."/>
            <person name="Chen F."/>
            <person name="Lapidus A."/>
            <person name="Ferriera S."/>
            <person name="Johnson J."/>
            <person name="Steglich C."/>
            <person name="Church G.M."/>
            <person name="Richardson P."/>
            <person name="Chisholm S.W."/>
        </authorList>
    </citation>
    <scope>NUCLEOTIDE SEQUENCE [LARGE SCALE GENOMIC DNA]</scope>
    <source>
        <strain>MIT 9515</strain>
    </source>
</reference>
<name>RL21_PROM5</name>
<keyword id="KW-0687">Ribonucleoprotein</keyword>
<keyword id="KW-0689">Ribosomal protein</keyword>
<keyword id="KW-0694">RNA-binding</keyword>
<keyword id="KW-0699">rRNA-binding</keyword>
<protein>
    <recommendedName>
        <fullName evidence="1">Large ribosomal subunit protein bL21</fullName>
    </recommendedName>
    <alternativeName>
        <fullName evidence="3">50S ribosomal protein L21</fullName>
    </alternativeName>
</protein>
<feature type="chain" id="PRO_1000067875" description="Large ribosomal subunit protein bL21">
    <location>
        <begin position="1"/>
        <end position="146"/>
    </location>
</feature>
<feature type="region of interest" description="Disordered" evidence="2">
    <location>
        <begin position="95"/>
        <end position="146"/>
    </location>
</feature>
<feature type="compositionally biased region" description="Basic residues" evidence="2">
    <location>
        <begin position="95"/>
        <end position="104"/>
    </location>
</feature>
<feature type="compositionally biased region" description="Low complexity" evidence="2">
    <location>
        <begin position="115"/>
        <end position="146"/>
    </location>
</feature>
<proteinExistence type="inferred from homology"/>
<gene>
    <name evidence="1" type="primary">rplU</name>
    <name evidence="1" type="synonym">rpl21</name>
    <name type="ordered locus">P9515_15051</name>
</gene>
<evidence type="ECO:0000255" key="1">
    <source>
        <dbReference type="HAMAP-Rule" id="MF_01363"/>
    </source>
</evidence>
<evidence type="ECO:0000256" key="2">
    <source>
        <dbReference type="SAM" id="MobiDB-lite"/>
    </source>
</evidence>
<evidence type="ECO:0000305" key="3"/>